<dbReference type="EMBL" id="AM933172">
    <property type="protein sequence ID" value="CAR34833.1"/>
    <property type="molecule type" value="Genomic_DNA"/>
</dbReference>
<dbReference type="RefSeq" id="WP_000613954.1">
    <property type="nucleotide sequence ID" value="NC_011294.1"/>
</dbReference>
<dbReference type="SMR" id="B5R281"/>
<dbReference type="GeneID" id="98390432"/>
<dbReference type="KEGG" id="set:SEN3258"/>
<dbReference type="HOGENOM" id="CLU_095071_2_1_6"/>
<dbReference type="Proteomes" id="UP000000613">
    <property type="component" value="Chromosome"/>
</dbReference>
<dbReference type="GO" id="GO:0022625">
    <property type="term" value="C:cytosolic large ribosomal subunit"/>
    <property type="evidence" value="ECO:0007669"/>
    <property type="project" value="TreeGrafter"/>
</dbReference>
<dbReference type="GO" id="GO:0070180">
    <property type="term" value="F:large ribosomal subunit rRNA binding"/>
    <property type="evidence" value="ECO:0007669"/>
    <property type="project" value="TreeGrafter"/>
</dbReference>
<dbReference type="GO" id="GO:0003735">
    <property type="term" value="F:structural constituent of ribosome"/>
    <property type="evidence" value="ECO:0007669"/>
    <property type="project" value="InterPro"/>
</dbReference>
<dbReference type="GO" id="GO:0006412">
    <property type="term" value="P:translation"/>
    <property type="evidence" value="ECO:0007669"/>
    <property type="project" value="UniProtKB-UniRule"/>
</dbReference>
<dbReference type="CDD" id="cd00337">
    <property type="entry name" value="Ribosomal_uL14"/>
    <property type="match status" value="1"/>
</dbReference>
<dbReference type="FunFam" id="2.40.150.20:FF:000001">
    <property type="entry name" value="50S ribosomal protein L14"/>
    <property type="match status" value="1"/>
</dbReference>
<dbReference type="Gene3D" id="2.40.150.20">
    <property type="entry name" value="Ribosomal protein L14"/>
    <property type="match status" value="1"/>
</dbReference>
<dbReference type="HAMAP" id="MF_01367">
    <property type="entry name" value="Ribosomal_uL14"/>
    <property type="match status" value="1"/>
</dbReference>
<dbReference type="InterPro" id="IPR000218">
    <property type="entry name" value="Ribosomal_uL14"/>
</dbReference>
<dbReference type="InterPro" id="IPR005745">
    <property type="entry name" value="Ribosomal_uL14_bac-type"/>
</dbReference>
<dbReference type="InterPro" id="IPR019972">
    <property type="entry name" value="Ribosomal_uL14_CS"/>
</dbReference>
<dbReference type="InterPro" id="IPR036853">
    <property type="entry name" value="Ribosomal_uL14_sf"/>
</dbReference>
<dbReference type="NCBIfam" id="TIGR01067">
    <property type="entry name" value="rplN_bact"/>
    <property type="match status" value="1"/>
</dbReference>
<dbReference type="PANTHER" id="PTHR11761">
    <property type="entry name" value="50S/60S RIBOSOMAL PROTEIN L14/L23"/>
    <property type="match status" value="1"/>
</dbReference>
<dbReference type="PANTHER" id="PTHR11761:SF3">
    <property type="entry name" value="LARGE RIBOSOMAL SUBUNIT PROTEIN UL14M"/>
    <property type="match status" value="1"/>
</dbReference>
<dbReference type="Pfam" id="PF00238">
    <property type="entry name" value="Ribosomal_L14"/>
    <property type="match status" value="1"/>
</dbReference>
<dbReference type="SMART" id="SM01374">
    <property type="entry name" value="Ribosomal_L14"/>
    <property type="match status" value="1"/>
</dbReference>
<dbReference type="SUPFAM" id="SSF50193">
    <property type="entry name" value="Ribosomal protein L14"/>
    <property type="match status" value="1"/>
</dbReference>
<dbReference type="PROSITE" id="PS00049">
    <property type="entry name" value="RIBOSOMAL_L14"/>
    <property type="match status" value="1"/>
</dbReference>
<evidence type="ECO:0000255" key="1">
    <source>
        <dbReference type="HAMAP-Rule" id="MF_01367"/>
    </source>
</evidence>
<evidence type="ECO:0000305" key="2"/>
<accession>B5R281</accession>
<reference key="1">
    <citation type="journal article" date="2008" name="Genome Res.">
        <title>Comparative genome analysis of Salmonella enteritidis PT4 and Salmonella gallinarum 287/91 provides insights into evolutionary and host adaptation pathways.</title>
        <authorList>
            <person name="Thomson N.R."/>
            <person name="Clayton D.J."/>
            <person name="Windhorst D."/>
            <person name="Vernikos G."/>
            <person name="Davidson S."/>
            <person name="Churcher C."/>
            <person name="Quail M.A."/>
            <person name="Stevens M."/>
            <person name="Jones M.A."/>
            <person name="Watson M."/>
            <person name="Barron A."/>
            <person name="Layton A."/>
            <person name="Pickard D."/>
            <person name="Kingsley R.A."/>
            <person name="Bignell A."/>
            <person name="Clark L."/>
            <person name="Harris B."/>
            <person name="Ormond D."/>
            <person name="Abdellah Z."/>
            <person name="Brooks K."/>
            <person name="Cherevach I."/>
            <person name="Chillingworth T."/>
            <person name="Woodward J."/>
            <person name="Norberczak H."/>
            <person name="Lord A."/>
            <person name="Arrowsmith C."/>
            <person name="Jagels K."/>
            <person name="Moule S."/>
            <person name="Mungall K."/>
            <person name="Saunders M."/>
            <person name="Whitehead S."/>
            <person name="Chabalgoity J.A."/>
            <person name="Maskell D."/>
            <person name="Humphreys T."/>
            <person name="Roberts M."/>
            <person name="Barrow P.A."/>
            <person name="Dougan G."/>
            <person name="Parkhill J."/>
        </authorList>
    </citation>
    <scope>NUCLEOTIDE SEQUENCE [LARGE SCALE GENOMIC DNA]</scope>
    <source>
        <strain>P125109</strain>
    </source>
</reference>
<gene>
    <name evidence="1" type="primary">rplN</name>
    <name type="ordered locus">SEN3258</name>
</gene>
<protein>
    <recommendedName>
        <fullName evidence="1">Large ribosomal subunit protein uL14</fullName>
    </recommendedName>
    <alternativeName>
        <fullName evidence="2">50S ribosomal protein L14</fullName>
    </alternativeName>
</protein>
<name>RL14_SALEP</name>
<organism>
    <name type="scientific">Salmonella enteritidis PT4 (strain P125109)</name>
    <dbReference type="NCBI Taxonomy" id="550537"/>
    <lineage>
        <taxon>Bacteria</taxon>
        <taxon>Pseudomonadati</taxon>
        <taxon>Pseudomonadota</taxon>
        <taxon>Gammaproteobacteria</taxon>
        <taxon>Enterobacterales</taxon>
        <taxon>Enterobacteriaceae</taxon>
        <taxon>Salmonella</taxon>
    </lineage>
</organism>
<comment type="function">
    <text evidence="1">Binds to 23S rRNA. Forms part of two intersubunit bridges in the 70S ribosome.</text>
</comment>
<comment type="subunit">
    <text evidence="1">Part of the 50S ribosomal subunit. Forms a cluster with proteins L3 and L19. In the 70S ribosome, L14 and L19 interact and together make contacts with the 16S rRNA in bridges B5 and B8.</text>
</comment>
<comment type="similarity">
    <text evidence="1">Belongs to the universal ribosomal protein uL14 family.</text>
</comment>
<sequence length="123" mass="13568">MIQEQTMLNVADNSGARRVMCIKVLGGSHRRYAGVGDIIKITIKEAIPRGKVKKGDVLKAVVVRTKKGVRRPDGSVIRFDGNACVILNNNSEQPIGTRIFGPVTRELRNEKFMKIISLAPEVL</sequence>
<proteinExistence type="inferred from homology"/>
<feature type="chain" id="PRO_1000144323" description="Large ribosomal subunit protein uL14">
    <location>
        <begin position="1"/>
        <end position="123"/>
    </location>
</feature>
<keyword id="KW-0687">Ribonucleoprotein</keyword>
<keyword id="KW-0689">Ribosomal protein</keyword>
<keyword id="KW-0694">RNA-binding</keyword>
<keyword id="KW-0699">rRNA-binding</keyword>